<dbReference type="EC" id="5.6.2.2" evidence="1 4"/>
<dbReference type="EMBL" id="Z70722">
    <property type="protein sequence ID" value="CAA94712.1"/>
    <property type="status" value="ALT_INIT"/>
    <property type="molecule type" value="Genomic_DNA"/>
</dbReference>
<dbReference type="EMBL" id="AL583917">
    <property type="protein sequence ID" value="CAC29513.1"/>
    <property type="molecule type" value="Genomic_DNA"/>
</dbReference>
<dbReference type="PIR" id="E86909">
    <property type="entry name" value="E86909"/>
</dbReference>
<dbReference type="RefSeq" id="NP_301133.1">
    <property type="nucleotide sequence ID" value="NC_002677.1"/>
</dbReference>
<dbReference type="RefSeq" id="WP_010907458.1">
    <property type="nucleotide sequence ID" value="NC_002677.1"/>
</dbReference>
<dbReference type="SMR" id="Q59533"/>
<dbReference type="STRING" id="272631.gene:17573814"/>
<dbReference type="KEGG" id="mle:ML0005"/>
<dbReference type="PATRIC" id="fig|272631.5.peg.5"/>
<dbReference type="Leproma" id="ML0005"/>
<dbReference type="eggNOG" id="COG0187">
    <property type="taxonomic scope" value="Bacteria"/>
</dbReference>
<dbReference type="HOGENOM" id="CLU_006146_4_1_11"/>
<dbReference type="OrthoDB" id="9802808at2"/>
<dbReference type="Proteomes" id="UP000000806">
    <property type="component" value="Chromosome"/>
</dbReference>
<dbReference type="GO" id="GO:0005694">
    <property type="term" value="C:chromosome"/>
    <property type="evidence" value="ECO:0007669"/>
    <property type="project" value="InterPro"/>
</dbReference>
<dbReference type="GO" id="GO:0005737">
    <property type="term" value="C:cytoplasm"/>
    <property type="evidence" value="ECO:0007669"/>
    <property type="project" value="UniProtKB-SubCell"/>
</dbReference>
<dbReference type="GO" id="GO:0005524">
    <property type="term" value="F:ATP binding"/>
    <property type="evidence" value="ECO:0007669"/>
    <property type="project" value="UniProtKB-UniRule"/>
</dbReference>
<dbReference type="GO" id="GO:0003677">
    <property type="term" value="F:DNA binding"/>
    <property type="evidence" value="ECO:0007669"/>
    <property type="project" value="UniProtKB-KW"/>
</dbReference>
<dbReference type="GO" id="GO:0034335">
    <property type="term" value="F:DNA negative supercoiling activity"/>
    <property type="evidence" value="ECO:0000314"/>
    <property type="project" value="UniProtKB"/>
</dbReference>
<dbReference type="GO" id="GO:0046872">
    <property type="term" value="F:metal ion binding"/>
    <property type="evidence" value="ECO:0007669"/>
    <property type="project" value="UniProtKB-KW"/>
</dbReference>
<dbReference type="GO" id="GO:0006265">
    <property type="term" value="P:DNA topological change"/>
    <property type="evidence" value="ECO:0007669"/>
    <property type="project" value="UniProtKB-UniRule"/>
</dbReference>
<dbReference type="GO" id="GO:0006261">
    <property type="term" value="P:DNA-templated DNA replication"/>
    <property type="evidence" value="ECO:0007669"/>
    <property type="project" value="UniProtKB-UniRule"/>
</dbReference>
<dbReference type="CDD" id="cd16928">
    <property type="entry name" value="HATPase_GyrB-like"/>
    <property type="match status" value="1"/>
</dbReference>
<dbReference type="CDD" id="cd00822">
    <property type="entry name" value="TopoII_Trans_DNA_gyrase"/>
    <property type="match status" value="1"/>
</dbReference>
<dbReference type="FunFam" id="3.30.230.10:FF:000005">
    <property type="entry name" value="DNA gyrase subunit B"/>
    <property type="match status" value="1"/>
</dbReference>
<dbReference type="FunFam" id="3.30.565.10:FF:000002">
    <property type="entry name" value="DNA gyrase subunit B"/>
    <property type="match status" value="1"/>
</dbReference>
<dbReference type="FunFam" id="3.40.50.670:FF:000002">
    <property type="entry name" value="DNA gyrase subunit B"/>
    <property type="match status" value="1"/>
</dbReference>
<dbReference type="Gene3D" id="3.30.230.10">
    <property type="match status" value="1"/>
</dbReference>
<dbReference type="Gene3D" id="3.40.50.670">
    <property type="match status" value="1"/>
</dbReference>
<dbReference type="Gene3D" id="3.30.565.10">
    <property type="entry name" value="Histidine kinase-like ATPase, C-terminal domain"/>
    <property type="match status" value="1"/>
</dbReference>
<dbReference type="HAMAP" id="MF_01898">
    <property type="entry name" value="GyrB"/>
    <property type="match status" value="1"/>
</dbReference>
<dbReference type="InterPro" id="IPR002288">
    <property type="entry name" value="DNA_gyrase_B_C"/>
</dbReference>
<dbReference type="InterPro" id="IPR011557">
    <property type="entry name" value="GyrB"/>
</dbReference>
<dbReference type="InterPro" id="IPR036890">
    <property type="entry name" value="HATPase_C_sf"/>
</dbReference>
<dbReference type="InterPro" id="IPR020568">
    <property type="entry name" value="Ribosomal_Su5_D2-typ_SF"/>
</dbReference>
<dbReference type="InterPro" id="IPR014721">
    <property type="entry name" value="Ribsml_uS5_D2-typ_fold_subgr"/>
</dbReference>
<dbReference type="InterPro" id="IPR001241">
    <property type="entry name" value="Topo_IIA"/>
</dbReference>
<dbReference type="InterPro" id="IPR013760">
    <property type="entry name" value="Topo_IIA-like_dom_sf"/>
</dbReference>
<dbReference type="InterPro" id="IPR000565">
    <property type="entry name" value="Topo_IIA_B"/>
</dbReference>
<dbReference type="InterPro" id="IPR013759">
    <property type="entry name" value="Topo_IIA_B_C"/>
</dbReference>
<dbReference type="InterPro" id="IPR013506">
    <property type="entry name" value="Topo_IIA_bsu_dom2"/>
</dbReference>
<dbReference type="InterPro" id="IPR018522">
    <property type="entry name" value="TopoIIA_CS"/>
</dbReference>
<dbReference type="InterPro" id="IPR006171">
    <property type="entry name" value="TOPRIM_dom"/>
</dbReference>
<dbReference type="NCBIfam" id="TIGR01059">
    <property type="entry name" value="gyrB"/>
    <property type="match status" value="1"/>
</dbReference>
<dbReference type="NCBIfam" id="NF004189">
    <property type="entry name" value="PRK05644.1"/>
    <property type="match status" value="1"/>
</dbReference>
<dbReference type="PANTHER" id="PTHR45866:SF1">
    <property type="entry name" value="DNA GYRASE SUBUNIT B, MITOCHONDRIAL"/>
    <property type="match status" value="1"/>
</dbReference>
<dbReference type="PANTHER" id="PTHR45866">
    <property type="entry name" value="DNA GYRASE/TOPOISOMERASE SUBUNIT B"/>
    <property type="match status" value="1"/>
</dbReference>
<dbReference type="Pfam" id="PF00204">
    <property type="entry name" value="DNA_gyraseB"/>
    <property type="match status" value="1"/>
</dbReference>
<dbReference type="Pfam" id="PF00986">
    <property type="entry name" value="DNA_gyraseB_C"/>
    <property type="match status" value="1"/>
</dbReference>
<dbReference type="Pfam" id="PF02518">
    <property type="entry name" value="HATPase_c"/>
    <property type="match status" value="1"/>
</dbReference>
<dbReference type="Pfam" id="PF01751">
    <property type="entry name" value="Toprim"/>
    <property type="match status" value="1"/>
</dbReference>
<dbReference type="PRINTS" id="PR01159">
    <property type="entry name" value="DNAGYRASEB"/>
</dbReference>
<dbReference type="PRINTS" id="PR00418">
    <property type="entry name" value="TPI2FAMILY"/>
</dbReference>
<dbReference type="SMART" id="SM00387">
    <property type="entry name" value="HATPase_c"/>
    <property type="match status" value="1"/>
</dbReference>
<dbReference type="SMART" id="SM00433">
    <property type="entry name" value="TOP2c"/>
    <property type="match status" value="1"/>
</dbReference>
<dbReference type="SUPFAM" id="SSF55874">
    <property type="entry name" value="ATPase domain of HSP90 chaperone/DNA topoisomerase II/histidine kinase"/>
    <property type="match status" value="1"/>
</dbReference>
<dbReference type="SUPFAM" id="SSF54211">
    <property type="entry name" value="Ribosomal protein S5 domain 2-like"/>
    <property type="match status" value="1"/>
</dbReference>
<dbReference type="SUPFAM" id="SSF56719">
    <property type="entry name" value="Type II DNA topoisomerase"/>
    <property type="match status" value="1"/>
</dbReference>
<dbReference type="PROSITE" id="PS00177">
    <property type="entry name" value="TOPOISOMERASE_II"/>
    <property type="match status" value="1"/>
</dbReference>
<dbReference type="PROSITE" id="PS50880">
    <property type="entry name" value="TOPRIM"/>
    <property type="match status" value="1"/>
</dbReference>
<sequence>MAAQRKAQDEYGAASITILEGLEAVRKRPGMYVGSTGERGLHHLIWEVVDNSVDEAMAGYATQVDVRLFDDGSVEVADNGRGIPVAVHATGVPTVDVVMTQLHAGGKFGGKDSGYNVSGGLHGVGVSVVNALSTRVEVDIKRDGYEWSQFYDKAVPGILKQGEATEATGTTIRFWADPDIFETTKYDFGTVARRIQEVAFLNKGLTINLVDERVKQDEVVDDVVSDTAEAPVAMTVEEKSTESSAPHKVRHRTFHYPGGLVDFVKHINRTKTPIQQSIIDFDGKGAGHEVEVAMQWNGGYSESVHTFANTINTHEGGTHEEGFRSALTSVVNKYAKDKKLLKDKDPNLTGDDIREGLAAVISVKVSEPQFEGQTKTKLGNTEVKSFVQRVCNEQLIHWFEANPVDAKAVVNKAISSAQARIAARKARELVRRKSATDLGGLPGKLADCRSTDPRSSELYVVEGDSAGGSAKSGRDSMFQAILPLRGKIINVEKARIDRVLKNTEVQAIITALGTGIHDEFDISRLRYHKIVLMADADVDGQHISTLLLTLLFRFMRPLIEHGYVFLAQPPLYKLKWQRMDPEFAYSDSERDGLLETGLKLGKKINKEDGIQRYKGLGEMDAKELWETTMDPSVRVLRQVTLDDAAAADELFSILMGEDVDARRSFITRNAKDVRFLDV</sequence>
<proteinExistence type="evidence at protein level"/>
<accession>Q59533</accession>
<accession>Q9CDF3</accession>
<protein>
    <recommendedName>
        <fullName evidence="1">DNA gyrase subunit B</fullName>
        <ecNumber evidence="1 4">5.6.2.2</ecNumber>
    </recommendedName>
</protein>
<reference key="1">
    <citation type="journal article" date="1996" name="Microbiology">
        <title>Gene arrangement and organization in an approximately 76 kb fragment encompassing the oriC region of the chromosome of Mycobacterium leprae.</title>
        <authorList>
            <person name="Fsihi H."/>
            <person name="de Rossi E."/>
            <person name="Salazar L."/>
            <person name="Cantoni R."/>
            <person name="Labo M."/>
            <person name="Riccardi G."/>
            <person name="Takiff H.E."/>
            <person name="Eiglmeier K."/>
            <person name="Bergh S."/>
            <person name="Cole S.T."/>
        </authorList>
    </citation>
    <scope>NUCLEOTIDE SEQUENCE [GENOMIC DNA]</scope>
</reference>
<reference key="2">
    <citation type="journal article" date="2001" name="Nature">
        <title>Massive gene decay in the leprosy bacillus.</title>
        <authorList>
            <person name="Cole S.T."/>
            <person name="Eiglmeier K."/>
            <person name="Parkhill J."/>
            <person name="James K.D."/>
            <person name="Thomson N.R."/>
            <person name="Wheeler P.R."/>
            <person name="Honore N."/>
            <person name="Garnier T."/>
            <person name="Churcher C.M."/>
            <person name="Harris D.E."/>
            <person name="Mungall K.L."/>
            <person name="Basham D."/>
            <person name="Brown D."/>
            <person name="Chillingworth T."/>
            <person name="Connor R."/>
            <person name="Davies R.M."/>
            <person name="Devlin K."/>
            <person name="Duthoy S."/>
            <person name="Feltwell T."/>
            <person name="Fraser A."/>
            <person name="Hamlin N."/>
            <person name="Holroyd S."/>
            <person name="Hornsby T."/>
            <person name="Jagels K."/>
            <person name="Lacroix C."/>
            <person name="Maclean J."/>
            <person name="Moule S."/>
            <person name="Murphy L.D."/>
            <person name="Oliver K."/>
            <person name="Quail M.A."/>
            <person name="Rajandream M.A."/>
            <person name="Rutherford K.M."/>
            <person name="Rutter S."/>
            <person name="Seeger K."/>
            <person name="Simon S."/>
            <person name="Simmonds M."/>
            <person name="Skelton J."/>
            <person name="Squares R."/>
            <person name="Squares S."/>
            <person name="Stevens K."/>
            <person name="Taylor K."/>
            <person name="Whitehead S."/>
            <person name="Woodward J.R."/>
            <person name="Barrell B.G."/>
        </authorList>
    </citation>
    <scope>NUCLEOTIDE SEQUENCE [LARGE SCALE GENOMIC DNA]</scope>
    <source>
        <strain>TN</strain>
    </source>
</reference>
<reference key="3">
    <citation type="journal article" date="2007" name="Antimicrob. Agents Chemother.">
        <title>Expression and purification of an active form of the Mycobacterium leprae DNA gyrase and its inhibition by quinolones.</title>
        <authorList>
            <person name="Matrat S."/>
            <person name="Petrella S."/>
            <person name="Cambau E."/>
            <person name="Sougakoff W."/>
            <person name="Jarlier V."/>
            <person name="Aubry A."/>
        </authorList>
    </citation>
    <scope>FUNCTION</scope>
    <scope>ACTIVITY REGULATION</scope>
    <scope>SUBUNIT</scope>
</reference>
<gene>
    <name evidence="1" type="primary">gyrB</name>
    <name type="ordered locus">ML0005</name>
</gene>
<feature type="chain" id="PRO_0000145321" description="DNA gyrase subunit B">
    <location>
        <begin position="1"/>
        <end position="678"/>
    </location>
</feature>
<feature type="domain" description="Toprim" evidence="1">
    <location>
        <begin position="456"/>
        <end position="570"/>
    </location>
</feature>
<feature type="binding site" evidence="1">
    <location>
        <position position="462"/>
    </location>
    <ligand>
        <name>Mg(2+)</name>
        <dbReference type="ChEBI" id="CHEBI:18420"/>
        <label>1</label>
        <note>catalytic</note>
    </ligand>
</feature>
<feature type="binding site" evidence="1">
    <location>
        <position position="535"/>
    </location>
    <ligand>
        <name>Mg(2+)</name>
        <dbReference type="ChEBI" id="CHEBI:18420"/>
        <label>1</label>
        <note>catalytic</note>
    </ligand>
</feature>
<feature type="binding site" evidence="1">
    <location>
        <position position="535"/>
    </location>
    <ligand>
        <name>Mg(2+)</name>
        <dbReference type="ChEBI" id="CHEBI:18420"/>
        <label>2</label>
    </ligand>
</feature>
<feature type="binding site" evidence="1">
    <location>
        <position position="537"/>
    </location>
    <ligand>
        <name>Mg(2+)</name>
        <dbReference type="ChEBI" id="CHEBI:18420"/>
        <label>2</label>
    </ligand>
</feature>
<feature type="site" description="Interaction with DNA" evidence="1">
    <location>
        <position position="487"/>
    </location>
</feature>
<feature type="site" description="Interaction with DNA" evidence="1">
    <location>
        <position position="490"/>
    </location>
</feature>
<comment type="function">
    <text evidence="1 2">A type II topoisomerase that negatively supercoils closed circular double-stranded (ds) DNA in an ATP-dependent manner to modulate DNA topology and maintain chromosomes in an underwound state (PubMed:17325221). Negative supercoiling favors strand separation, and DNA replication, transcription, recombination and repair, all of which involve strand separation. Also able to catalyze the interconversion of other topological isomers of dsDNA rings, including catenanes and knotted rings. Type II topoisomerases break and join 2 DNA strands simultaneously in an ATP-dependent manner.</text>
</comment>
<comment type="catalytic activity">
    <reaction evidence="1 4">
        <text>ATP-dependent breakage, passage and rejoining of double-stranded DNA.</text>
        <dbReference type="EC" id="5.6.2.2"/>
    </reaction>
</comment>
<comment type="cofactor">
    <cofactor evidence="1">
        <name>Mg(2+)</name>
        <dbReference type="ChEBI" id="CHEBI:18420"/>
    </cofactor>
    <cofactor evidence="1">
        <name>Mn(2+)</name>
        <dbReference type="ChEBI" id="CHEBI:29035"/>
    </cofactor>
    <cofactor evidence="1">
        <name>Ca(2+)</name>
        <dbReference type="ChEBI" id="CHEBI:29108"/>
    </cofactor>
    <text evidence="1">Binds two Mg(2+) per subunit. The magnesium ions form salt bridges with both the protein and the DNA. Can also accept other divalent metal cations, such as Mn(2+) or Ca(2+).</text>
</comment>
<comment type="activity regulation">
    <text evidence="2">DNA supercoiling is inhibited by fluoroquinolones; IC(50) 1 ug/ml for sitafloxacin (PubMed:17325221).</text>
</comment>
<comment type="subunit">
    <text evidence="1 2">Heterotetramer, composed of two GyrA and two GyrB chains (PubMed:17325221). In the heterotetramer, GyrA contains the active site tyrosine that forms a transient covalent intermediate with the DNA, while GyrB binds cofactors catalyzes ATP hydrolysis.</text>
</comment>
<comment type="subcellular location">
    <subcellularLocation>
        <location evidence="1">Cytoplasm</location>
    </subcellularLocation>
</comment>
<comment type="miscellaneous">
    <text evidence="1">Few gyrases are as efficient as E.coli at forming negative supercoils. Not all organisms have 2 type II topoisomerases; in organisms with a single type II topoisomerase this enzyme also has to decatenate newly replicated chromosomes.</text>
</comment>
<comment type="similarity">
    <text evidence="1">Belongs to the type II topoisomerase GyrB family.</text>
</comment>
<comment type="sequence caution" evidence="3">
    <conflict type="erroneous initiation">
        <sequence resource="EMBL-CDS" id="CAA94712"/>
    </conflict>
    <text>Extended N-terminus.</text>
</comment>
<evidence type="ECO:0000255" key="1">
    <source>
        <dbReference type="HAMAP-Rule" id="MF_01898"/>
    </source>
</evidence>
<evidence type="ECO:0000269" key="2">
    <source>
    </source>
</evidence>
<evidence type="ECO:0000305" key="3"/>
<evidence type="ECO:0000305" key="4">
    <source>
    </source>
</evidence>
<name>GYRB_MYCLE</name>
<keyword id="KW-0067">ATP-binding</keyword>
<keyword id="KW-0963">Cytoplasm</keyword>
<keyword id="KW-0238">DNA-binding</keyword>
<keyword id="KW-0413">Isomerase</keyword>
<keyword id="KW-0460">Magnesium</keyword>
<keyword id="KW-0479">Metal-binding</keyword>
<keyword id="KW-0547">Nucleotide-binding</keyword>
<keyword id="KW-1185">Reference proteome</keyword>
<keyword id="KW-0799">Topoisomerase</keyword>
<organism>
    <name type="scientific">Mycobacterium leprae (strain TN)</name>
    <dbReference type="NCBI Taxonomy" id="272631"/>
    <lineage>
        <taxon>Bacteria</taxon>
        <taxon>Bacillati</taxon>
        <taxon>Actinomycetota</taxon>
        <taxon>Actinomycetes</taxon>
        <taxon>Mycobacteriales</taxon>
        <taxon>Mycobacteriaceae</taxon>
        <taxon>Mycobacterium</taxon>
    </lineage>
</organism>